<name>IF1_LEGPC</name>
<organism>
    <name type="scientific">Legionella pneumophila (strain Corby)</name>
    <dbReference type="NCBI Taxonomy" id="400673"/>
    <lineage>
        <taxon>Bacteria</taxon>
        <taxon>Pseudomonadati</taxon>
        <taxon>Pseudomonadota</taxon>
        <taxon>Gammaproteobacteria</taxon>
        <taxon>Legionellales</taxon>
        <taxon>Legionellaceae</taxon>
        <taxon>Legionella</taxon>
    </lineage>
</organism>
<gene>
    <name evidence="1" type="primary">infA</name>
    <name type="ordered locus">LPC_1211</name>
</gene>
<accession>A5ICS5</accession>
<sequence>MAKEDHIEMAGTVIDTLPNTMFRVELENGHIVTAHISGRMRKNYIRILTGDKVKVELTPYDLSKGRIIFRDKG</sequence>
<feature type="chain" id="PRO_0000338851" description="Translation initiation factor IF-1">
    <location>
        <begin position="1"/>
        <end position="73"/>
    </location>
</feature>
<feature type="domain" description="S1-like" evidence="1">
    <location>
        <begin position="1"/>
        <end position="72"/>
    </location>
</feature>
<dbReference type="EMBL" id="CP000675">
    <property type="protein sequence ID" value="ABQ55175.1"/>
    <property type="molecule type" value="Genomic_DNA"/>
</dbReference>
<dbReference type="RefSeq" id="WP_010947496.1">
    <property type="nucleotide sequence ID" value="NZ_JAPMSS010000005.1"/>
</dbReference>
<dbReference type="SMR" id="A5ICS5"/>
<dbReference type="GeneID" id="57035759"/>
<dbReference type="KEGG" id="lpc:LPC_1211"/>
<dbReference type="HOGENOM" id="CLU_151267_1_0_6"/>
<dbReference type="GO" id="GO:0005829">
    <property type="term" value="C:cytosol"/>
    <property type="evidence" value="ECO:0007669"/>
    <property type="project" value="TreeGrafter"/>
</dbReference>
<dbReference type="GO" id="GO:0043022">
    <property type="term" value="F:ribosome binding"/>
    <property type="evidence" value="ECO:0007669"/>
    <property type="project" value="UniProtKB-UniRule"/>
</dbReference>
<dbReference type="GO" id="GO:0019843">
    <property type="term" value="F:rRNA binding"/>
    <property type="evidence" value="ECO:0007669"/>
    <property type="project" value="UniProtKB-UniRule"/>
</dbReference>
<dbReference type="GO" id="GO:0003743">
    <property type="term" value="F:translation initiation factor activity"/>
    <property type="evidence" value="ECO:0007669"/>
    <property type="project" value="UniProtKB-UniRule"/>
</dbReference>
<dbReference type="CDD" id="cd04451">
    <property type="entry name" value="S1_IF1"/>
    <property type="match status" value="1"/>
</dbReference>
<dbReference type="FunFam" id="2.40.50.140:FF:000002">
    <property type="entry name" value="Translation initiation factor IF-1"/>
    <property type="match status" value="1"/>
</dbReference>
<dbReference type="Gene3D" id="2.40.50.140">
    <property type="entry name" value="Nucleic acid-binding proteins"/>
    <property type="match status" value="1"/>
</dbReference>
<dbReference type="HAMAP" id="MF_00075">
    <property type="entry name" value="IF_1"/>
    <property type="match status" value="1"/>
</dbReference>
<dbReference type="InterPro" id="IPR012340">
    <property type="entry name" value="NA-bd_OB-fold"/>
</dbReference>
<dbReference type="InterPro" id="IPR006196">
    <property type="entry name" value="RNA-binding_domain_S1_IF1"/>
</dbReference>
<dbReference type="InterPro" id="IPR003029">
    <property type="entry name" value="S1_domain"/>
</dbReference>
<dbReference type="InterPro" id="IPR004368">
    <property type="entry name" value="TIF_IF1"/>
</dbReference>
<dbReference type="NCBIfam" id="TIGR00008">
    <property type="entry name" value="infA"/>
    <property type="match status" value="1"/>
</dbReference>
<dbReference type="PANTHER" id="PTHR33370">
    <property type="entry name" value="TRANSLATION INITIATION FACTOR IF-1, CHLOROPLASTIC"/>
    <property type="match status" value="1"/>
</dbReference>
<dbReference type="PANTHER" id="PTHR33370:SF1">
    <property type="entry name" value="TRANSLATION INITIATION FACTOR IF-1, CHLOROPLASTIC"/>
    <property type="match status" value="1"/>
</dbReference>
<dbReference type="Pfam" id="PF01176">
    <property type="entry name" value="eIF-1a"/>
    <property type="match status" value="1"/>
</dbReference>
<dbReference type="SMART" id="SM00316">
    <property type="entry name" value="S1"/>
    <property type="match status" value="1"/>
</dbReference>
<dbReference type="SUPFAM" id="SSF50249">
    <property type="entry name" value="Nucleic acid-binding proteins"/>
    <property type="match status" value="1"/>
</dbReference>
<dbReference type="PROSITE" id="PS50832">
    <property type="entry name" value="S1_IF1_TYPE"/>
    <property type="match status" value="1"/>
</dbReference>
<proteinExistence type="inferred from homology"/>
<evidence type="ECO:0000255" key="1">
    <source>
        <dbReference type="HAMAP-Rule" id="MF_00075"/>
    </source>
</evidence>
<comment type="function">
    <text evidence="1">One of the essential components for the initiation of protein synthesis. Stabilizes the binding of IF-2 and IF-3 on the 30S subunit to which N-formylmethionyl-tRNA(fMet) subsequently binds. Helps modulate mRNA selection, yielding the 30S pre-initiation complex (PIC). Upon addition of the 50S ribosomal subunit IF-1, IF-2 and IF-3 are released leaving the mature 70S translation initiation complex.</text>
</comment>
<comment type="subunit">
    <text evidence="1">Component of the 30S ribosomal translation pre-initiation complex which assembles on the 30S ribosome in the order IF-2 and IF-3, IF-1 and N-formylmethionyl-tRNA(fMet); mRNA recruitment can occur at any time during PIC assembly.</text>
</comment>
<comment type="subcellular location">
    <subcellularLocation>
        <location evidence="1">Cytoplasm</location>
    </subcellularLocation>
</comment>
<comment type="similarity">
    <text evidence="1">Belongs to the IF-1 family.</text>
</comment>
<keyword id="KW-0963">Cytoplasm</keyword>
<keyword id="KW-0396">Initiation factor</keyword>
<keyword id="KW-0648">Protein biosynthesis</keyword>
<keyword id="KW-0694">RNA-binding</keyword>
<keyword id="KW-0699">rRNA-binding</keyword>
<protein>
    <recommendedName>
        <fullName evidence="1">Translation initiation factor IF-1</fullName>
    </recommendedName>
</protein>
<reference key="1">
    <citation type="submission" date="2006-11" db="EMBL/GenBank/DDBJ databases">
        <title>Identification and characterization of a new conjugation/ type IVA secretion system (trb/tra) of L. pneumophila Corby localized on a mobile genomic island.</title>
        <authorList>
            <person name="Gloeckner G."/>
            <person name="Albert-Weissenberger C."/>
            <person name="Weinmann E."/>
            <person name="Jacobi S."/>
            <person name="Schunder E."/>
            <person name="Steinert M."/>
            <person name="Buchrieser C."/>
            <person name="Hacker J."/>
            <person name="Heuner K."/>
        </authorList>
    </citation>
    <scope>NUCLEOTIDE SEQUENCE [LARGE SCALE GENOMIC DNA]</scope>
    <source>
        <strain>Corby</strain>
    </source>
</reference>